<feature type="chain" id="PRO_0000123237" description="Small ribosomal subunit protein uS11">
    <location>
        <begin position="1"/>
        <end position="127"/>
    </location>
</feature>
<protein>
    <recommendedName>
        <fullName evidence="1">Small ribosomal subunit protein uS11</fullName>
    </recommendedName>
    <alternativeName>
        <fullName evidence="2">30S ribosomal protein S11</fullName>
    </alternativeName>
</protein>
<gene>
    <name evidence="1" type="primary">rpsK</name>
    <name type="ordered locus">M6_Spy0118</name>
</gene>
<dbReference type="EMBL" id="CP000003">
    <property type="protein sequence ID" value="AAT86253.1"/>
    <property type="molecule type" value="Genomic_DNA"/>
</dbReference>
<dbReference type="RefSeq" id="WP_001118387.1">
    <property type="nucleotide sequence ID" value="NC_006086.1"/>
</dbReference>
<dbReference type="SMR" id="Q5XEB0"/>
<dbReference type="GeneID" id="93825319"/>
<dbReference type="KEGG" id="spa:M6_Spy0118"/>
<dbReference type="HOGENOM" id="CLU_072439_5_0_9"/>
<dbReference type="Proteomes" id="UP000001167">
    <property type="component" value="Chromosome"/>
</dbReference>
<dbReference type="GO" id="GO:1990904">
    <property type="term" value="C:ribonucleoprotein complex"/>
    <property type="evidence" value="ECO:0007669"/>
    <property type="project" value="UniProtKB-KW"/>
</dbReference>
<dbReference type="GO" id="GO:0005840">
    <property type="term" value="C:ribosome"/>
    <property type="evidence" value="ECO:0007669"/>
    <property type="project" value="UniProtKB-KW"/>
</dbReference>
<dbReference type="GO" id="GO:0019843">
    <property type="term" value="F:rRNA binding"/>
    <property type="evidence" value="ECO:0007669"/>
    <property type="project" value="UniProtKB-UniRule"/>
</dbReference>
<dbReference type="GO" id="GO:0003735">
    <property type="term" value="F:structural constituent of ribosome"/>
    <property type="evidence" value="ECO:0007669"/>
    <property type="project" value="InterPro"/>
</dbReference>
<dbReference type="GO" id="GO:0006412">
    <property type="term" value="P:translation"/>
    <property type="evidence" value="ECO:0007669"/>
    <property type="project" value="UniProtKB-UniRule"/>
</dbReference>
<dbReference type="FunFam" id="3.30.420.80:FF:000001">
    <property type="entry name" value="30S ribosomal protein S11"/>
    <property type="match status" value="1"/>
</dbReference>
<dbReference type="Gene3D" id="3.30.420.80">
    <property type="entry name" value="Ribosomal protein S11"/>
    <property type="match status" value="1"/>
</dbReference>
<dbReference type="HAMAP" id="MF_01310">
    <property type="entry name" value="Ribosomal_uS11"/>
    <property type="match status" value="1"/>
</dbReference>
<dbReference type="InterPro" id="IPR001971">
    <property type="entry name" value="Ribosomal_uS11"/>
</dbReference>
<dbReference type="InterPro" id="IPR019981">
    <property type="entry name" value="Ribosomal_uS11_bac-type"/>
</dbReference>
<dbReference type="InterPro" id="IPR018102">
    <property type="entry name" value="Ribosomal_uS11_CS"/>
</dbReference>
<dbReference type="InterPro" id="IPR036967">
    <property type="entry name" value="Ribosomal_uS11_sf"/>
</dbReference>
<dbReference type="NCBIfam" id="NF003698">
    <property type="entry name" value="PRK05309.1"/>
    <property type="match status" value="1"/>
</dbReference>
<dbReference type="NCBIfam" id="TIGR03632">
    <property type="entry name" value="uS11_bact"/>
    <property type="match status" value="1"/>
</dbReference>
<dbReference type="PANTHER" id="PTHR11759">
    <property type="entry name" value="40S RIBOSOMAL PROTEIN S14/30S RIBOSOMAL PROTEIN S11"/>
    <property type="match status" value="1"/>
</dbReference>
<dbReference type="Pfam" id="PF00411">
    <property type="entry name" value="Ribosomal_S11"/>
    <property type="match status" value="1"/>
</dbReference>
<dbReference type="PIRSF" id="PIRSF002131">
    <property type="entry name" value="Ribosomal_S11"/>
    <property type="match status" value="1"/>
</dbReference>
<dbReference type="SUPFAM" id="SSF53137">
    <property type="entry name" value="Translational machinery components"/>
    <property type="match status" value="1"/>
</dbReference>
<dbReference type="PROSITE" id="PS00054">
    <property type="entry name" value="RIBOSOMAL_S11"/>
    <property type="match status" value="1"/>
</dbReference>
<accession>Q5XEB0</accession>
<reference key="1">
    <citation type="journal article" date="2004" name="J. Infect. Dis.">
        <title>Progress toward characterization of the group A Streptococcus metagenome: complete genome sequence of a macrolide-resistant serotype M6 strain.</title>
        <authorList>
            <person name="Banks D.J."/>
            <person name="Porcella S.F."/>
            <person name="Barbian K.D."/>
            <person name="Beres S.B."/>
            <person name="Philips L.E."/>
            <person name="Voyich J.M."/>
            <person name="DeLeo F.R."/>
            <person name="Martin J.M."/>
            <person name="Somerville G.A."/>
            <person name="Musser J.M."/>
        </authorList>
    </citation>
    <scope>NUCLEOTIDE SEQUENCE [LARGE SCALE GENOMIC DNA]</scope>
    <source>
        <strain>ATCC BAA-946 / MGAS10394</strain>
    </source>
</reference>
<sequence length="127" mass="13369">MAKPTRKRRVKKNIESGVAHIHATFNNTIVMITDVHGNALAWSSAGALGFKGSRKSTPFAAQMAAEAAAKSAQEHGLKTVEVTVKGPGSGRESAIRALAAAGLEVTAIRDVTPVPHNGARPPKRRRV</sequence>
<name>RS11_STRP6</name>
<proteinExistence type="inferred from homology"/>
<organism>
    <name type="scientific">Streptococcus pyogenes serotype M6 (strain ATCC BAA-946 / MGAS10394)</name>
    <dbReference type="NCBI Taxonomy" id="286636"/>
    <lineage>
        <taxon>Bacteria</taxon>
        <taxon>Bacillati</taxon>
        <taxon>Bacillota</taxon>
        <taxon>Bacilli</taxon>
        <taxon>Lactobacillales</taxon>
        <taxon>Streptococcaceae</taxon>
        <taxon>Streptococcus</taxon>
    </lineage>
</organism>
<evidence type="ECO:0000255" key="1">
    <source>
        <dbReference type="HAMAP-Rule" id="MF_01310"/>
    </source>
</evidence>
<evidence type="ECO:0000305" key="2"/>
<comment type="function">
    <text evidence="1">Located on the platform of the 30S subunit, it bridges several disparate RNA helices of the 16S rRNA. Forms part of the Shine-Dalgarno cleft in the 70S ribosome.</text>
</comment>
<comment type="subunit">
    <text evidence="1">Part of the 30S ribosomal subunit. Interacts with proteins S7 and S18. Binds to IF-3.</text>
</comment>
<comment type="similarity">
    <text evidence="1">Belongs to the universal ribosomal protein uS11 family.</text>
</comment>
<keyword id="KW-0687">Ribonucleoprotein</keyword>
<keyword id="KW-0689">Ribosomal protein</keyword>
<keyword id="KW-0694">RNA-binding</keyword>
<keyword id="KW-0699">rRNA-binding</keyword>